<name>RNC_BORA1</name>
<protein>
    <recommendedName>
        <fullName evidence="1">Ribonuclease 3</fullName>
        <ecNumber evidence="1">3.1.26.3</ecNumber>
    </recommendedName>
    <alternativeName>
        <fullName evidence="1">Ribonuclease III</fullName>
        <shortName evidence="1">RNase III</shortName>
    </alternativeName>
</protein>
<gene>
    <name evidence="1" type="primary">rnc</name>
    <name type="ordered locus">BAV1131</name>
</gene>
<evidence type="ECO:0000255" key="1">
    <source>
        <dbReference type="HAMAP-Rule" id="MF_00104"/>
    </source>
</evidence>
<keyword id="KW-0963">Cytoplasm</keyword>
<keyword id="KW-0255">Endonuclease</keyword>
<keyword id="KW-0378">Hydrolase</keyword>
<keyword id="KW-0460">Magnesium</keyword>
<keyword id="KW-0479">Metal-binding</keyword>
<keyword id="KW-0507">mRNA processing</keyword>
<keyword id="KW-0540">Nuclease</keyword>
<keyword id="KW-1185">Reference proteome</keyword>
<keyword id="KW-0694">RNA-binding</keyword>
<keyword id="KW-0698">rRNA processing</keyword>
<keyword id="KW-0699">rRNA-binding</keyword>
<keyword id="KW-0819">tRNA processing</keyword>
<proteinExistence type="inferred from homology"/>
<organism>
    <name type="scientific">Bordetella avium (strain 197N)</name>
    <dbReference type="NCBI Taxonomy" id="360910"/>
    <lineage>
        <taxon>Bacteria</taxon>
        <taxon>Pseudomonadati</taxon>
        <taxon>Pseudomonadota</taxon>
        <taxon>Betaproteobacteria</taxon>
        <taxon>Burkholderiales</taxon>
        <taxon>Alcaligenaceae</taxon>
        <taxon>Bordetella</taxon>
    </lineage>
</organism>
<comment type="function">
    <text evidence="1">Digests double-stranded RNA. Involved in the processing of primary rRNA transcript to yield the immediate precursors to the large and small rRNAs (23S and 16S). Processes some mRNAs, and tRNAs when they are encoded in the rRNA operon. Processes pre-crRNA and tracrRNA of type II CRISPR loci if present in the organism.</text>
</comment>
<comment type="catalytic activity">
    <reaction evidence="1">
        <text>Endonucleolytic cleavage to 5'-phosphomonoester.</text>
        <dbReference type="EC" id="3.1.26.3"/>
    </reaction>
</comment>
<comment type="cofactor">
    <cofactor evidence="1">
        <name>Mg(2+)</name>
        <dbReference type="ChEBI" id="CHEBI:18420"/>
    </cofactor>
</comment>
<comment type="subunit">
    <text evidence="1">Homodimer.</text>
</comment>
<comment type="subcellular location">
    <subcellularLocation>
        <location evidence="1">Cytoplasm</location>
    </subcellularLocation>
</comment>
<comment type="similarity">
    <text evidence="1">Belongs to the ribonuclease III family.</text>
</comment>
<dbReference type="EC" id="3.1.26.3" evidence="1"/>
<dbReference type="EMBL" id="AM167904">
    <property type="protein sequence ID" value="CAJ48740.1"/>
    <property type="molecule type" value="Genomic_DNA"/>
</dbReference>
<dbReference type="RefSeq" id="WP_012416814.1">
    <property type="nucleotide sequence ID" value="NC_010645.1"/>
</dbReference>
<dbReference type="SMR" id="Q2KWY0"/>
<dbReference type="STRING" id="360910.BAV1131"/>
<dbReference type="GeneID" id="92935676"/>
<dbReference type="KEGG" id="bav:BAV1131"/>
<dbReference type="eggNOG" id="COG0571">
    <property type="taxonomic scope" value="Bacteria"/>
</dbReference>
<dbReference type="HOGENOM" id="CLU_000907_1_1_4"/>
<dbReference type="OrthoDB" id="9805026at2"/>
<dbReference type="Proteomes" id="UP000001977">
    <property type="component" value="Chromosome"/>
</dbReference>
<dbReference type="GO" id="GO:0005737">
    <property type="term" value="C:cytoplasm"/>
    <property type="evidence" value="ECO:0007669"/>
    <property type="project" value="UniProtKB-SubCell"/>
</dbReference>
<dbReference type="GO" id="GO:0003725">
    <property type="term" value="F:double-stranded RNA binding"/>
    <property type="evidence" value="ECO:0007669"/>
    <property type="project" value="TreeGrafter"/>
</dbReference>
<dbReference type="GO" id="GO:0046872">
    <property type="term" value="F:metal ion binding"/>
    <property type="evidence" value="ECO:0007669"/>
    <property type="project" value="UniProtKB-KW"/>
</dbReference>
<dbReference type="GO" id="GO:0004525">
    <property type="term" value="F:ribonuclease III activity"/>
    <property type="evidence" value="ECO:0007669"/>
    <property type="project" value="UniProtKB-UniRule"/>
</dbReference>
<dbReference type="GO" id="GO:0019843">
    <property type="term" value="F:rRNA binding"/>
    <property type="evidence" value="ECO:0007669"/>
    <property type="project" value="UniProtKB-KW"/>
</dbReference>
<dbReference type="GO" id="GO:0006397">
    <property type="term" value="P:mRNA processing"/>
    <property type="evidence" value="ECO:0007669"/>
    <property type="project" value="UniProtKB-UniRule"/>
</dbReference>
<dbReference type="GO" id="GO:0010468">
    <property type="term" value="P:regulation of gene expression"/>
    <property type="evidence" value="ECO:0007669"/>
    <property type="project" value="TreeGrafter"/>
</dbReference>
<dbReference type="GO" id="GO:0006364">
    <property type="term" value="P:rRNA processing"/>
    <property type="evidence" value="ECO:0007669"/>
    <property type="project" value="UniProtKB-UniRule"/>
</dbReference>
<dbReference type="GO" id="GO:0008033">
    <property type="term" value="P:tRNA processing"/>
    <property type="evidence" value="ECO:0007669"/>
    <property type="project" value="UniProtKB-KW"/>
</dbReference>
<dbReference type="CDD" id="cd10845">
    <property type="entry name" value="DSRM_RNAse_III_family"/>
    <property type="match status" value="1"/>
</dbReference>
<dbReference type="CDD" id="cd00593">
    <property type="entry name" value="RIBOc"/>
    <property type="match status" value="1"/>
</dbReference>
<dbReference type="FunFam" id="1.10.1520.10:FF:000001">
    <property type="entry name" value="Ribonuclease 3"/>
    <property type="match status" value="1"/>
</dbReference>
<dbReference type="Gene3D" id="3.30.160.20">
    <property type="match status" value="1"/>
</dbReference>
<dbReference type="Gene3D" id="1.10.1520.10">
    <property type="entry name" value="Ribonuclease III domain"/>
    <property type="match status" value="1"/>
</dbReference>
<dbReference type="HAMAP" id="MF_00104">
    <property type="entry name" value="RNase_III"/>
    <property type="match status" value="1"/>
</dbReference>
<dbReference type="InterPro" id="IPR014720">
    <property type="entry name" value="dsRBD_dom"/>
</dbReference>
<dbReference type="InterPro" id="IPR011907">
    <property type="entry name" value="RNase_III"/>
</dbReference>
<dbReference type="InterPro" id="IPR000999">
    <property type="entry name" value="RNase_III_dom"/>
</dbReference>
<dbReference type="InterPro" id="IPR036389">
    <property type="entry name" value="RNase_III_sf"/>
</dbReference>
<dbReference type="NCBIfam" id="TIGR02191">
    <property type="entry name" value="RNaseIII"/>
    <property type="match status" value="1"/>
</dbReference>
<dbReference type="PANTHER" id="PTHR11207:SF0">
    <property type="entry name" value="RIBONUCLEASE 3"/>
    <property type="match status" value="1"/>
</dbReference>
<dbReference type="PANTHER" id="PTHR11207">
    <property type="entry name" value="RIBONUCLEASE III"/>
    <property type="match status" value="1"/>
</dbReference>
<dbReference type="Pfam" id="PF00035">
    <property type="entry name" value="dsrm"/>
    <property type="match status" value="1"/>
</dbReference>
<dbReference type="Pfam" id="PF14622">
    <property type="entry name" value="Ribonucleas_3_3"/>
    <property type="match status" value="1"/>
</dbReference>
<dbReference type="SMART" id="SM00358">
    <property type="entry name" value="DSRM"/>
    <property type="match status" value="1"/>
</dbReference>
<dbReference type="SMART" id="SM00535">
    <property type="entry name" value="RIBOc"/>
    <property type="match status" value="1"/>
</dbReference>
<dbReference type="SUPFAM" id="SSF54768">
    <property type="entry name" value="dsRNA-binding domain-like"/>
    <property type="match status" value="1"/>
</dbReference>
<dbReference type="SUPFAM" id="SSF69065">
    <property type="entry name" value="RNase III domain-like"/>
    <property type="match status" value="1"/>
</dbReference>
<dbReference type="PROSITE" id="PS50137">
    <property type="entry name" value="DS_RBD"/>
    <property type="match status" value="1"/>
</dbReference>
<dbReference type="PROSITE" id="PS00517">
    <property type="entry name" value="RNASE_3_1"/>
    <property type="match status" value="1"/>
</dbReference>
<dbReference type="PROSITE" id="PS50142">
    <property type="entry name" value="RNASE_3_2"/>
    <property type="match status" value="1"/>
</dbReference>
<feature type="chain" id="PRO_1000075727" description="Ribonuclease 3">
    <location>
        <begin position="1"/>
        <end position="251"/>
    </location>
</feature>
<feature type="domain" description="RNase III" evidence="1">
    <location>
        <begin position="3"/>
        <end position="125"/>
    </location>
</feature>
<feature type="domain" description="DRBM" evidence="1">
    <location>
        <begin position="152"/>
        <end position="222"/>
    </location>
</feature>
<feature type="active site" evidence="1">
    <location>
        <position position="42"/>
    </location>
</feature>
<feature type="active site" evidence="1">
    <location>
        <position position="114"/>
    </location>
</feature>
<feature type="binding site" evidence="1">
    <location>
        <position position="38"/>
    </location>
    <ligand>
        <name>Mg(2+)</name>
        <dbReference type="ChEBI" id="CHEBI:18420"/>
    </ligand>
</feature>
<feature type="binding site" evidence="1">
    <location>
        <position position="111"/>
    </location>
    <ligand>
        <name>Mg(2+)</name>
        <dbReference type="ChEBI" id="CHEBI:18420"/>
    </ligand>
</feature>
<feature type="binding site" evidence="1">
    <location>
        <position position="114"/>
    </location>
    <ligand>
        <name>Mg(2+)</name>
        <dbReference type="ChEBI" id="CHEBI:18420"/>
    </ligand>
</feature>
<accession>Q2KWY0</accession>
<reference key="1">
    <citation type="journal article" date="2006" name="J. Bacteriol.">
        <title>Comparison of the genome sequence of the poultry pathogen Bordetella avium with those of B. bronchiseptica, B. pertussis, and B. parapertussis reveals extensive diversity in surface structures associated with host interaction.</title>
        <authorList>
            <person name="Sebaihia M."/>
            <person name="Preston A."/>
            <person name="Maskell D.J."/>
            <person name="Kuzmiak H."/>
            <person name="Connell T.D."/>
            <person name="King N.D."/>
            <person name="Orndorff P.E."/>
            <person name="Miyamoto D.M."/>
            <person name="Thomson N.R."/>
            <person name="Harris D."/>
            <person name="Goble A."/>
            <person name="Lord A."/>
            <person name="Murphy L."/>
            <person name="Quail M.A."/>
            <person name="Rutter S."/>
            <person name="Squares R."/>
            <person name="Squares S."/>
            <person name="Woodward J."/>
            <person name="Parkhill J."/>
            <person name="Temple L.M."/>
        </authorList>
    </citation>
    <scope>NUCLEOTIDE SEQUENCE [LARGE SCALE GENOMIC DNA]</scope>
    <source>
        <strain>197N</strain>
    </source>
</reference>
<sequence>MSLATLETRLGHHFGDQALLEQALTHRSHGARHNERLEFLGDSVLNFVVAAMLFERYAKLDEGDLSRVRANLVKQASLADIAQRLELSPYLRLGEGEMKSGGFRRPSILADAVEALFGAVFLDAGFDAARKVIEQQYVPVLANVDPETLGKDAKTLLQEFLQGRKLALPLYTVVATHGAAHSQQFEVECAIPALEIKVTAAGASRRAAEQSAAKLALEAALVVSPRATRKGGRARKTAQLSLPVAVAQEVK</sequence>